<sequence length="554" mass="57817">MRSKKMTHGLEKAPHRSLLHALGLTREELARPLVGVVNAANEVVPGHIHLDDIAEAVKAGVRAAGGTPLEFPAIAVCDGLAMNHEGMRFSLPSRELIADSIEIMATAHPFDALVFIPNCDKSVPGMLMAMLRLDVPSVMVSGGPMLAGATLAGRADLITVFEGVGRVQRGDMTEAELDELVEGACPGCGSCAGMFTANSMNCLAETIGLALPGNGTTPAVTAARIRLAKHAGMKVMEMLERNIRPRDIVTEKAVANAVAVDMALGCSTNTVLHLPAVFAEAGLDLTLDIFDKVSRKTPNLCKLSPAGHHHIQDLHAAGGIPAVMAELDSIGLIDRSAMTVTGRTVGENLDALGAKVRDADVIRSVDAPYSPQGGIAILKGSLAPGGAVVKQSAVAPEMMVREAVARVFDSEEAACEAIMGGRIKAGDAIVIRYEGPKGGPGMREMLTPTSAIAGMGLGADVALITDGRFSGGTRGAAIGHVSPEAAEGGPIGLVQEGDRIRIDIPARALDLLVDEDELARRRAVFVPVEKEITSPLLRRYARMVSSAATGARQR</sequence>
<organism>
    <name type="scientific">Nitratidesulfovibrio vulgaris (strain DP4)</name>
    <name type="common">Desulfovibrio vulgaris</name>
    <dbReference type="NCBI Taxonomy" id="391774"/>
    <lineage>
        <taxon>Bacteria</taxon>
        <taxon>Pseudomonadati</taxon>
        <taxon>Thermodesulfobacteriota</taxon>
        <taxon>Desulfovibrionia</taxon>
        <taxon>Desulfovibrionales</taxon>
        <taxon>Desulfovibrionaceae</taxon>
        <taxon>Nitratidesulfovibrio</taxon>
    </lineage>
</organism>
<keyword id="KW-0001">2Fe-2S</keyword>
<keyword id="KW-0028">Amino-acid biosynthesis</keyword>
<keyword id="KW-0100">Branched-chain amino acid biosynthesis</keyword>
<keyword id="KW-0408">Iron</keyword>
<keyword id="KW-0411">Iron-sulfur</keyword>
<keyword id="KW-0456">Lyase</keyword>
<keyword id="KW-0460">Magnesium</keyword>
<keyword id="KW-0479">Metal-binding</keyword>
<name>ILVD_NITV4</name>
<feature type="chain" id="PRO_1000000979" description="Dihydroxy-acid dehydratase">
    <location>
        <begin position="1"/>
        <end position="554"/>
    </location>
</feature>
<feature type="active site" description="Proton acceptor" evidence="1">
    <location>
        <position position="470"/>
    </location>
</feature>
<feature type="binding site" evidence="1">
    <location>
        <position position="78"/>
    </location>
    <ligand>
        <name>Mg(2+)</name>
        <dbReference type="ChEBI" id="CHEBI:18420"/>
    </ligand>
</feature>
<feature type="binding site" evidence="1">
    <location>
        <position position="119"/>
    </location>
    <ligand>
        <name>[2Fe-2S] cluster</name>
        <dbReference type="ChEBI" id="CHEBI:190135"/>
    </ligand>
</feature>
<feature type="binding site" evidence="1">
    <location>
        <position position="120"/>
    </location>
    <ligand>
        <name>Mg(2+)</name>
        <dbReference type="ChEBI" id="CHEBI:18420"/>
    </ligand>
</feature>
<feature type="binding site" description="via carbamate group" evidence="1">
    <location>
        <position position="121"/>
    </location>
    <ligand>
        <name>Mg(2+)</name>
        <dbReference type="ChEBI" id="CHEBI:18420"/>
    </ligand>
</feature>
<feature type="binding site" evidence="1">
    <location>
        <position position="191"/>
    </location>
    <ligand>
        <name>[2Fe-2S] cluster</name>
        <dbReference type="ChEBI" id="CHEBI:190135"/>
    </ligand>
</feature>
<feature type="binding site" evidence="1">
    <location>
        <position position="444"/>
    </location>
    <ligand>
        <name>Mg(2+)</name>
        <dbReference type="ChEBI" id="CHEBI:18420"/>
    </ligand>
</feature>
<feature type="modified residue" description="N6-carboxylysine" evidence="1">
    <location>
        <position position="121"/>
    </location>
</feature>
<dbReference type="EC" id="4.2.1.9" evidence="1"/>
<dbReference type="EMBL" id="CP000527">
    <property type="protein sequence ID" value="ABM27048.1"/>
    <property type="molecule type" value="Genomic_DNA"/>
</dbReference>
<dbReference type="RefSeq" id="WP_011791333.1">
    <property type="nucleotide sequence ID" value="NC_008751.1"/>
</dbReference>
<dbReference type="SMR" id="A1V9E1"/>
<dbReference type="KEGG" id="dvl:Dvul_0024"/>
<dbReference type="HOGENOM" id="CLU_014271_4_2_7"/>
<dbReference type="UniPathway" id="UPA00047">
    <property type="reaction ID" value="UER00057"/>
</dbReference>
<dbReference type="UniPathway" id="UPA00049">
    <property type="reaction ID" value="UER00061"/>
</dbReference>
<dbReference type="Proteomes" id="UP000009173">
    <property type="component" value="Chromosome"/>
</dbReference>
<dbReference type="GO" id="GO:0005829">
    <property type="term" value="C:cytosol"/>
    <property type="evidence" value="ECO:0007669"/>
    <property type="project" value="TreeGrafter"/>
</dbReference>
<dbReference type="GO" id="GO:0051537">
    <property type="term" value="F:2 iron, 2 sulfur cluster binding"/>
    <property type="evidence" value="ECO:0007669"/>
    <property type="project" value="UniProtKB-UniRule"/>
</dbReference>
<dbReference type="GO" id="GO:0004160">
    <property type="term" value="F:dihydroxy-acid dehydratase activity"/>
    <property type="evidence" value="ECO:0007669"/>
    <property type="project" value="UniProtKB-UniRule"/>
</dbReference>
<dbReference type="GO" id="GO:0000287">
    <property type="term" value="F:magnesium ion binding"/>
    <property type="evidence" value="ECO:0007669"/>
    <property type="project" value="UniProtKB-UniRule"/>
</dbReference>
<dbReference type="GO" id="GO:0009097">
    <property type="term" value="P:isoleucine biosynthetic process"/>
    <property type="evidence" value="ECO:0007669"/>
    <property type="project" value="UniProtKB-UniRule"/>
</dbReference>
<dbReference type="GO" id="GO:0009099">
    <property type="term" value="P:L-valine biosynthetic process"/>
    <property type="evidence" value="ECO:0007669"/>
    <property type="project" value="UniProtKB-UniRule"/>
</dbReference>
<dbReference type="FunFam" id="3.50.30.80:FF:000001">
    <property type="entry name" value="Dihydroxy-acid dehydratase"/>
    <property type="match status" value="1"/>
</dbReference>
<dbReference type="Gene3D" id="3.50.30.80">
    <property type="entry name" value="IlvD/EDD C-terminal domain-like"/>
    <property type="match status" value="1"/>
</dbReference>
<dbReference type="HAMAP" id="MF_00012">
    <property type="entry name" value="IlvD"/>
    <property type="match status" value="1"/>
</dbReference>
<dbReference type="InterPro" id="IPR042096">
    <property type="entry name" value="Dihydro-acid_dehy_C"/>
</dbReference>
<dbReference type="InterPro" id="IPR004404">
    <property type="entry name" value="DihydroxyA_deHydtase"/>
</dbReference>
<dbReference type="InterPro" id="IPR020558">
    <property type="entry name" value="DiOHA_6PGluconate_deHydtase_CS"/>
</dbReference>
<dbReference type="InterPro" id="IPR056740">
    <property type="entry name" value="ILV_EDD_C"/>
</dbReference>
<dbReference type="InterPro" id="IPR000581">
    <property type="entry name" value="ILV_EDD_N"/>
</dbReference>
<dbReference type="InterPro" id="IPR037237">
    <property type="entry name" value="IlvD/EDD_N"/>
</dbReference>
<dbReference type="NCBIfam" id="TIGR00110">
    <property type="entry name" value="ilvD"/>
    <property type="match status" value="1"/>
</dbReference>
<dbReference type="NCBIfam" id="NF002068">
    <property type="entry name" value="PRK00911.1"/>
    <property type="match status" value="1"/>
</dbReference>
<dbReference type="PANTHER" id="PTHR43661">
    <property type="entry name" value="D-XYLONATE DEHYDRATASE"/>
    <property type="match status" value="1"/>
</dbReference>
<dbReference type="PANTHER" id="PTHR43661:SF3">
    <property type="entry name" value="D-XYLONATE DEHYDRATASE YAGF-RELATED"/>
    <property type="match status" value="1"/>
</dbReference>
<dbReference type="Pfam" id="PF24877">
    <property type="entry name" value="ILV_EDD_C"/>
    <property type="match status" value="1"/>
</dbReference>
<dbReference type="Pfam" id="PF00920">
    <property type="entry name" value="ILVD_EDD_N"/>
    <property type="match status" value="1"/>
</dbReference>
<dbReference type="SUPFAM" id="SSF143975">
    <property type="entry name" value="IlvD/EDD N-terminal domain-like"/>
    <property type="match status" value="1"/>
</dbReference>
<dbReference type="SUPFAM" id="SSF52016">
    <property type="entry name" value="LeuD/IlvD-like"/>
    <property type="match status" value="1"/>
</dbReference>
<dbReference type="PROSITE" id="PS00886">
    <property type="entry name" value="ILVD_EDD_1"/>
    <property type="match status" value="1"/>
</dbReference>
<dbReference type="PROSITE" id="PS00887">
    <property type="entry name" value="ILVD_EDD_2"/>
    <property type="match status" value="1"/>
</dbReference>
<protein>
    <recommendedName>
        <fullName evidence="1">Dihydroxy-acid dehydratase</fullName>
        <shortName evidence="1">DAD</shortName>
        <ecNumber evidence="1">4.2.1.9</ecNumber>
    </recommendedName>
</protein>
<reference key="1">
    <citation type="journal article" date="2009" name="Environ. Microbiol.">
        <title>Contribution of mobile genetic elements to Desulfovibrio vulgaris genome plasticity.</title>
        <authorList>
            <person name="Walker C.B."/>
            <person name="Stolyar S."/>
            <person name="Chivian D."/>
            <person name="Pinel N."/>
            <person name="Gabster J.A."/>
            <person name="Dehal P.S."/>
            <person name="He Z."/>
            <person name="Yang Z.K."/>
            <person name="Yen H.C."/>
            <person name="Zhou J."/>
            <person name="Wall J.D."/>
            <person name="Hazen T.C."/>
            <person name="Arkin A.P."/>
            <person name="Stahl D.A."/>
        </authorList>
    </citation>
    <scope>NUCLEOTIDE SEQUENCE [LARGE SCALE GENOMIC DNA]</scope>
    <source>
        <strain>DP4</strain>
    </source>
</reference>
<evidence type="ECO:0000255" key="1">
    <source>
        <dbReference type="HAMAP-Rule" id="MF_00012"/>
    </source>
</evidence>
<accession>A1V9E1</accession>
<proteinExistence type="inferred from homology"/>
<comment type="function">
    <text evidence="1">Functions in the biosynthesis of branched-chain amino acids. Catalyzes the dehydration of (2R,3R)-2,3-dihydroxy-3-methylpentanoate (2,3-dihydroxy-3-methylvalerate) into 2-oxo-3-methylpentanoate (2-oxo-3-methylvalerate) and of (2R)-2,3-dihydroxy-3-methylbutanoate (2,3-dihydroxyisovalerate) into 2-oxo-3-methylbutanoate (2-oxoisovalerate), the penultimate precursor to L-isoleucine and L-valine, respectively.</text>
</comment>
<comment type="catalytic activity">
    <reaction evidence="1">
        <text>(2R)-2,3-dihydroxy-3-methylbutanoate = 3-methyl-2-oxobutanoate + H2O</text>
        <dbReference type="Rhea" id="RHEA:24809"/>
        <dbReference type="ChEBI" id="CHEBI:11851"/>
        <dbReference type="ChEBI" id="CHEBI:15377"/>
        <dbReference type="ChEBI" id="CHEBI:49072"/>
        <dbReference type="EC" id="4.2.1.9"/>
    </reaction>
    <physiologicalReaction direction="left-to-right" evidence="1">
        <dbReference type="Rhea" id="RHEA:24810"/>
    </physiologicalReaction>
</comment>
<comment type="catalytic activity">
    <reaction evidence="1">
        <text>(2R,3R)-2,3-dihydroxy-3-methylpentanoate = (S)-3-methyl-2-oxopentanoate + H2O</text>
        <dbReference type="Rhea" id="RHEA:27694"/>
        <dbReference type="ChEBI" id="CHEBI:15377"/>
        <dbReference type="ChEBI" id="CHEBI:35146"/>
        <dbReference type="ChEBI" id="CHEBI:49258"/>
        <dbReference type="EC" id="4.2.1.9"/>
    </reaction>
    <physiologicalReaction direction="left-to-right" evidence="1">
        <dbReference type="Rhea" id="RHEA:27695"/>
    </physiologicalReaction>
</comment>
<comment type="cofactor">
    <cofactor evidence="1">
        <name>[2Fe-2S] cluster</name>
        <dbReference type="ChEBI" id="CHEBI:190135"/>
    </cofactor>
    <text evidence="1">Binds 1 [2Fe-2S] cluster per subunit. This cluster acts as a Lewis acid cofactor.</text>
</comment>
<comment type="cofactor">
    <cofactor evidence="1">
        <name>Mg(2+)</name>
        <dbReference type="ChEBI" id="CHEBI:18420"/>
    </cofactor>
</comment>
<comment type="pathway">
    <text evidence="1">Amino-acid biosynthesis; L-isoleucine biosynthesis; L-isoleucine from 2-oxobutanoate: step 3/4.</text>
</comment>
<comment type="pathway">
    <text evidence="1">Amino-acid biosynthesis; L-valine biosynthesis; L-valine from pyruvate: step 3/4.</text>
</comment>
<comment type="subunit">
    <text evidence="1">Homodimer.</text>
</comment>
<comment type="similarity">
    <text evidence="1">Belongs to the IlvD/Edd family.</text>
</comment>
<gene>
    <name evidence="1" type="primary">ilvD</name>
    <name type="ordered locus">Dvul_0024</name>
</gene>